<accession>Q9UTI2</accession>
<reference key="1">
    <citation type="submission" date="2001-05" db="EMBL/GenBank/DDBJ databases">
        <title>Cloning and expression of glutaredoxin 2 (thioltransferase 2) from Schizosaccharomyces pombe.</title>
        <authorList>
            <person name="Kim H.-G."/>
            <person name="Cho Y.-W."/>
            <person name="Lee Y.-Y."/>
            <person name="Lim C.-J."/>
        </authorList>
    </citation>
    <scope>NUCLEOTIDE SEQUENCE [GENOMIC DNA]</scope>
</reference>
<reference key="2">
    <citation type="journal article" date="2002" name="Nature">
        <title>The genome sequence of Schizosaccharomyces pombe.</title>
        <authorList>
            <person name="Wood V."/>
            <person name="Gwilliam R."/>
            <person name="Rajandream M.A."/>
            <person name="Lyne M.H."/>
            <person name="Lyne R."/>
            <person name="Stewart A."/>
            <person name="Sgouros J.G."/>
            <person name="Peat N."/>
            <person name="Hayles J."/>
            <person name="Baker S.G."/>
            <person name="Basham D."/>
            <person name="Bowman S."/>
            <person name="Brooks K."/>
            <person name="Brown D."/>
            <person name="Brown S."/>
            <person name="Chillingworth T."/>
            <person name="Churcher C.M."/>
            <person name="Collins M."/>
            <person name="Connor R."/>
            <person name="Cronin A."/>
            <person name="Davis P."/>
            <person name="Feltwell T."/>
            <person name="Fraser A."/>
            <person name="Gentles S."/>
            <person name="Goble A."/>
            <person name="Hamlin N."/>
            <person name="Harris D.E."/>
            <person name="Hidalgo J."/>
            <person name="Hodgson G."/>
            <person name="Holroyd S."/>
            <person name="Hornsby T."/>
            <person name="Howarth S."/>
            <person name="Huckle E.J."/>
            <person name="Hunt S."/>
            <person name="Jagels K."/>
            <person name="James K.D."/>
            <person name="Jones L."/>
            <person name="Jones M."/>
            <person name="Leather S."/>
            <person name="McDonald S."/>
            <person name="McLean J."/>
            <person name="Mooney P."/>
            <person name="Moule S."/>
            <person name="Mungall K.L."/>
            <person name="Murphy L.D."/>
            <person name="Niblett D."/>
            <person name="Odell C."/>
            <person name="Oliver K."/>
            <person name="O'Neil S."/>
            <person name="Pearson D."/>
            <person name="Quail M.A."/>
            <person name="Rabbinowitsch E."/>
            <person name="Rutherford K.M."/>
            <person name="Rutter S."/>
            <person name="Saunders D."/>
            <person name="Seeger K."/>
            <person name="Sharp S."/>
            <person name="Skelton J."/>
            <person name="Simmonds M.N."/>
            <person name="Squares R."/>
            <person name="Squares S."/>
            <person name="Stevens K."/>
            <person name="Taylor K."/>
            <person name="Taylor R.G."/>
            <person name="Tivey A."/>
            <person name="Walsh S.V."/>
            <person name="Warren T."/>
            <person name="Whitehead S."/>
            <person name="Woodward J.R."/>
            <person name="Volckaert G."/>
            <person name="Aert R."/>
            <person name="Robben J."/>
            <person name="Grymonprez B."/>
            <person name="Weltjens I."/>
            <person name="Vanstreels E."/>
            <person name="Rieger M."/>
            <person name="Schaefer M."/>
            <person name="Mueller-Auer S."/>
            <person name="Gabel C."/>
            <person name="Fuchs M."/>
            <person name="Duesterhoeft A."/>
            <person name="Fritzc C."/>
            <person name="Holzer E."/>
            <person name="Moestl D."/>
            <person name="Hilbert H."/>
            <person name="Borzym K."/>
            <person name="Langer I."/>
            <person name="Beck A."/>
            <person name="Lehrach H."/>
            <person name="Reinhardt R."/>
            <person name="Pohl T.M."/>
            <person name="Eger P."/>
            <person name="Zimmermann W."/>
            <person name="Wedler H."/>
            <person name="Wambutt R."/>
            <person name="Purnelle B."/>
            <person name="Goffeau A."/>
            <person name="Cadieu E."/>
            <person name="Dreano S."/>
            <person name="Gloux S."/>
            <person name="Lelaure V."/>
            <person name="Mottier S."/>
            <person name="Galibert F."/>
            <person name="Aves S.J."/>
            <person name="Xiang Z."/>
            <person name="Hunt C."/>
            <person name="Moore K."/>
            <person name="Hurst S.M."/>
            <person name="Lucas M."/>
            <person name="Rochet M."/>
            <person name="Gaillardin C."/>
            <person name="Tallada V.A."/>
            <person name="Garzon A."/>
            <person name="Thode G."/>
            <person name="Daga R.R."/>
            <person name="Cruzado L."/>
            <person name="Jimenez J."/>
            <person name="Sanchez M."/>
            <person name="del Rey F."/>
            <person name="Benito J."/>
            <person name="Dominguez A."/>
            <person name="Revuelta J.L."/>
            <person name="Moreno S."/>
            <person name="Armstrong J."/>
            <person name="Forsburg S.L."/>
            <person name="Cerutti L."/>
            <person name="Lowe T."/>
            <person name="McCombie W.R."/>
            <person name="Paulsen I."/>
            <person name="Potashkin J."/>
            <person name="Shpakovski G.V."/>
            <person name="Ussery D."/>
            <person name="Barrell B.G."/>
            <person name="Nurse P."/>
        </authorList>
    </citation>
    <scope>NUCLEOTIDE SEQUENCE [LARGE SCALE GENOMIC DNA]</scope>
    <source>
        <strain>972 / ATCC 24843</strain>
    </source>
</reference>
<organism>
    <name type="scientific">Schizosaccharomyces pombe (strain 972 / ATCC 24843)</name>
    <name type="common">Fission yeast</name>
    <dbReference type="NCBI Taxonomy" id="284812"/>
    <lineage>
        <taxon>Eukaryota</taxon>
        <taxon>Fungi</taxon>
        <taxon>Dikarya</taxon>
        <taxon>Ascomycota</taxon>
        <taxon>Taphrinomycotina</taxon>
        <taxon>Schizosaccharomycetes</taxon>
        <taxon>Schizosaccharomycetales</taxon>
        <taxon>Schizosaccharomycetaceae</taxon>
        <taxon>Schizosaccharomyces</taxon>
    </lineage>
</organism>
<proteinExistence type="inferred from homology"/>
<comment type="function">
    <text evidence="1">The disulfide bond functions as an electron carrier in the glutathione-dependent synthesis of deoxyribonucleotides by the enzyme ribonucleotide reductase. In addition, it is also involved in reducing some disulfides in a coupled system with glutathione reductase. Thioltransferase catalyzes cellular thiol-disulfide transhydrogenation reactions. It transfers reducing equivalents to cytosolic protein and nonprotein disulfides (By similarity).</text>
</comment>
<comment type="similarity">
    <text evidence="3">Belongs to the glutaredoxin family.</text>
</comment>
<dbReference type="EMBL" id="AF380128">
    <property type="protein sequence ID" value="AAK55420.1"/>
    <property type="molecule type" value="Genomic_DNA"/>
</dbReference>
<dbReference type="EMBL" id="CU329670">
    <property type="protein sequence ID" value="CAB52428.1"/>
    <property type="molecule type" value="Genomic_DNA"/>
</dbReference>
<dbReference type="PIR" id="T37724">
    <property type="entry name" value="T37724"/>
</dbReference>
<dbReference type="RefSeq" id="NP_594310.1">
    <property type="nucleotide sequence ID" value="NM_001019733.2"/>
</dbReference>
<dbReference type="SMR" id="Q9UTI2"/>
<dbReference type="BioGRID" id="279255">
    <property type="interactions" value="2"/>
</dbReference>
<dbReference type="FunCoup" id="Q9UTI2">
    <property type="interactions" value="231"/>
</dbReference>
<dbReference type="STRING" id="284812.Q9UTI2"/>
<dbReference type="iPTMnet" id="Q9UTI2"/>
<dbReference type="PaxDb" id="4896-SPAC15E1.09.1"/>
<dbReference type="EnsemblFungi" id="SPAC15E1.09.1">
    <property type="protein sequence ID" value="SPAC15E1.09.1:pep"/>
    <property type="gene ID" value="SPAC15E1.09"/>
</dbReference>
<dbReference type="GeneID" id="2542807"/>
<dbReference type="KEGG" id="spo:2542807"/>
<dbReference type="PomBase" id="SPAC15E1.09">
    <property type="gene designation" value="grx2"/>
</dbReference>
<dbReference type="VEuPathDB" id="FungiDB:SPAC15E1.09"/>
<dbReference type="eggNOG" id="KOG1752">
    <property type="taxonomic scope" value="Eukaryota"/>
</dbReference>
<dbReference type="HOGENOM" id="CLU_026126_7_2_1"/>
<dbReference type="InParanoid" id="Q9UTI2"/>
<dbReference type="OMA" id="IYTSPLC"/>
<dbReference type="PhylomeDB" id="Q9UTI2"/>
<dbReference type="PRO" id="PR:Q9UTI2"/>
<dbReference type="Proteomes" id="UP000002485">
    <property type="component" value="Chromosome I"/>
</dbReference>
<dbReference type="GO" id="GO:0005737">
    <property type="term" value="C:cytoplasm"/>
    <property type="evidence" value="ECO:0000318"/>
    <property type="project" value="GO_Central"/>
</dbReference>
<dbReference type="GO" id="GO:0005739">
    <property type="term" value="C:mitochondrion"/>
    <property type="evidence" value="ECO:0000314"/>
    <property type="project" value="PomBase"/>
</dbReference>
<dbReference type="GO" id="GO:0005634">
    <property type="term" value="C:nucleus"/>
    <property type="evidence" value="ECO:0000314"/>
    <property type="project" value="PomBase"/>
</dbReference>
<dbReference type="GO" id="GO:0015038">
    <property type="term" value="F:glutathione disulfide oxidoreductase activity"/>
    <property type="evidence" value="ECO:0000315"/>
    <property type="project" value="PomBase"/>
</dbReference>
<dbReference type="GO" id="GO:0004602">
    <property type="term" value="F:glutathione peroxidase activity"/>
    <property type="evidence" value="ECO:0000250"/>
    <property type="project" value="PomBase"/>
</dbReference>
<dbReference type="GO" id="GO:0015035">
    <property type="term" value="F:protein-disulfide reductase activity"/>
    <property type="evidence" value="ECO:0000303"/>
    <property type="project" value="PomBase"/>
</dbReference>
<dbReference type="GO" id="GO:0045454">
    <property type="term" value="P:cell redox homeostasis"/>
    <property type="evidence" value="ECO:0000250"/>
    <property type="project" value="PomBase"/>
</dbReference>
<dbReference type="GO" id="GO:0034599">
    <property type="term" value="P:cellular response to oxidative stress"/>
    <property type="evidence" value="ECO:0000316"/>
    <property type="project" value="PomBase"/>
</dbReference>
<dbReference type="GO" id="GO:0019430">
    <property type="term" value="P:removal of superoxide radicals"/>
    <property type="evidence" value="ECO:0000315"/>
    <property type="project" value="PomBase"/>
</dbReference>
<dbReference type="CDD" id="cd03419">
    <property type="entry name" value="GRX_GRXh_1_2_like"/>
    <property type="match status" value="1"/>
</dbReference>
<dbReference type="FunFam" id="3.40.30.10:FF:000893">
    <property type="entry name" value="Predicted protein"/>
    <property type="match status" value="1"/>
</dbReference>
<dbReference type="Gene3D" id="3.40.30.10">
    <property type="entry name" value="Glutaredoxin"/>
    <property type="match status" value="1"/>
</dbReference>
<dbReference type="InterPro" id="IPR011767">
    <property type="entry name" value="GLR_AS"/>
</dbReference>
<dbReference type="InterPro" id="IPR002109">
    <property type="entry name" value="Glutaredoxin"/>
</dbReference>
<dbReference type="InterPro" id="IPR011899">
    <property type="entry name" value="Glutaredoxin_euk/vir"/>
</dbReference>
<dbReference type="InterPro" id="IPR014025">
    <property type="entry name" value="Glutaredoxin_subgr"/>
</dbReference>
<dbReference type="InterPro" id="IPR036249">
    <property type="entry name" value="Thioredoxin-like_sf"/>
</dbReference>
<dbReference type="NCBIfam" id="TIGR02180">
    <property type="entry name" value="GRX_euk"/>
    <property type="match status" value="1"/>
</dbReference>
<dbReference type="PANTHER" id="PTHR45694">
    <property type="entry name" value="GLUTAREDOXIN 2"/>
    <property type="match status" value="1"/>
</dbReference>
<dbReference type="PANTHER" id="PTHR45694:SF27">
    <property type="entry name" value="GLUTAREDOXIN-2"/>
    <property type="match status" value="1"/>
</dbReference>
<dbReference type="Pfam" id="PF00462">
    <property type="entry name" value="Glutaredoxin"/>
    <property type="match status" value="1"/>
</dbReference>
<dbReference type="PRINTS" id="PR00160">
    <property type="entry name" value="GLUTAREDOXIN"/>
</dbReference>
<dbReference type="SUPFAM" id="SSF52833">
    <property type="entry name" value="Thioredoxin-like"/>
    <property type="match status" value="1"/>
</dbReference>
<dbReference type="PROSITE" id="PS00195">
    <property type="entry name" value="GLUTAREDOXIN_1"/>
    <property type="match status" value="1"/>
</dbReference>
<dbReference type="PROSITE" id="PS51354">
    <property type="entry name" value="GLUTAREDOXIN_2"/>
    <property type="match status" value="1"/>
</dbReference>
<gene>
    <name type="primary">grx2</name>
    <name type="ORF">SPAC15E1.09</name>
</gene>
<keyword id="KW-1015">Disulfide bond</keyword>
<keyword id="KW-0249">Electron transport</keyword>
<keyword id="KW-0676">Redox-active center</keyword>
<keyword id="KW-1185">Reference proteome</keyword>
<keyword id="KW-0813">Transport</keyword>
<protein>
    <recommendedName>
        <fullName>Glutaredoxin-2</fullName>
    </recommendedName>
</protein>
<evidence type="ECO:0000250" key="1"/>
<evidence type="ECO:0000255" key="2">
    <source>
        <dbReference type="PROSITE-ProRule" id="PRU00686"/>
    </source>
</evidence>
<evidence type="ECO:0000305" key="3"/>
<name>GLRX2_SCHPO</name>
<feature type="chain" id="PRO_0000141611" description="Glutaredoxin-2">
    <location>
        <begin position="1"/>
        <end position="110"/>
    </location>
</feature>
<feature type="domain" description="Glutaredoxin" evidence="2">
    <location>
        <begin position="6"/>
        <end position="106"/>
    </location>
</feature>
<feature type="disulfide bond" description="Redox-active" evidence="1">
    <location>
        <begin position="26"/>
        <end position="29"/>
    </location>
</feature>
<sequence length="110" mass="12235">MTSIAKAFVEKAISNNPVTVFSKSFCPFCKAAKNTLTKYSAPYKAYELDKIENGSDIQAYLHEKTKQSTVPSIFFRNQFIGGNSDLNKLRSSGTLTKMIAELKENKSSIL</sequence>